<accession>B3CRZ9</accession>
<comment type="function">
    <text evidence="1">Binds to the 23S rRNA.</text>
</comment>
<comment type="similarity">
    <text evidence="1">Belongs to the bacterial ribosomal protein bL9 family.</text>
</comment>
<sequence>MKLILIKPVKKLGKIMDIVDVANGFGRNYLLPRNYAIRATNANLEIVKSTVQQLNEKNQKGIDAAQAVMQKIDRSFITFICQTSDDGKLFGSITAKEIIKKLQISSDIKAYIDIKPIKTAGIHEVEVSLHAEVHCKIFINVARSNTEAQEYLKKFNAALQNTNNNVLVEKN</sequence>
<name>RL9_ORITI</name>
<gene>
    <name evidence="1" type="primary">rplI</name>
    <name type="ordered locus">OTT_0798</name>
</gene>
<feature type="chain" id="PRO_1000126948" description="Large ribosomal subunit protein bL9">
    <location>
        <begin position="1"/>
        <end position="171"/>
    </location>
</feature>
<proteinExistence type="inferred from homology"/>
<organism>
    <name type="scientific">Orientia tsutsugamushi (strain Ikeda)</name>
    <name type="common">Rickettsia tsutsugamushi</name>
    <dbReference type="NCBI Taxonomy" id="334380"/>
    <lineage>
        <taxon>Bacteria</taxon>
        <taxon>Pseudomonadati</taxon>
        <taxon>Pseudomonadota</taxon>
        <taxon>Alphaproteobacteria</taxon>
        <taxon>Rickettsiales</taxon>
        <taxon>Rickettsiaceae</taxon>
        <taxon>Rickettsieae</taxon>
        <taxon>Orientia</taxon>
    </lineage>
</organism>
<dbReference type="EMBL" id="AP008981">
    <property type="protein sequence ID" value="BAG40256.1"/>
    <property type="molecule type" value="Genomic_DNA"/>
</dbReference>
<dbReference type="RefSeq" id="WP_012461409.1">
    <property type="nucleotide sequence ID" value="NC_010793.1"/>
</dbReference>
<dbReference type="SMR" id="B3CRZ9"/>
<dbReference type="KEGG" id="ott:OTT_0798"/>
<dbReference type="HOGENOM" id="CLU_078938_3_0_5"/>
<dbReference type="OrthoDB" id="9788336at2"/>
<dbReference type="Proteomes" id="UP000001033">
    <property type="component" value="Chromosome"/>
</dbReference>
<dbReference type="GO" id="GO:1990904">
    <property type="term" value="C:ribonucleoprotein complex"/>
    <property type="evidence" value="ECO:0007669"/>
    <property type="project" value="UniProtKB-KW"/>
</dbReference>
<dbReference type="GO" id="GO:0005840">
    <property type="term" value="C:ribosome"/>
    <property type="evidence" value="ECO:0007669"/>
    <property type="project" value="UniProtKB-KW"/>
</dbReference>
<dbReference type="GO" id="GO:0019843">
    <property type="term" value="F:rRNA binding"/>
    <property type="evidence" value="ECO:0007669"/>
    <property type="project" value="UniProtKB-UniRule"/>
</dbReference>
<dbReference type="GO" id="GO:0003735">
    <property type="term" value="F:structural constituent of ribosome"/>
    <property type="evidence" value="ECO:0007669"/>
    <property type="project" value="InterPro"/>
</dbReference>
<dbReference type="GO" id="GO:0006412">
    <property type="term" value="P:translation"/>
    <property type="evidence" value="ECO:0007669"/>
    <property type="project" value="UniProtKB-UniRule"/>
</dbReference>
<dbReference type="Gene3D" id="3.10.430.100">
    <property type="entry name" value="Ribosomal protein L9, C-terminal domain"/>
    <property type="match status" value="1"/>
</dbReference>
<dbReference type="Gene3D" id="3.40.5.10">
    <property type="entry name" value="Ribosomal protein L9, N-terminal domain"/>
    <property type="match status" value="1"/>
</dbReference>
<dbReference type="HAMAP" id="MF_00503">
    <property type="entry name" value="Ribosomal_bL9"/>
    <property type="match status" value="1"/>
</dbReference>
<dbReference type="InterPro" id="IPR000244">
    <property type="entry name" value="Ribosomal_bL9"/>
</dbReference>
<dbReference type="InterPro" id="IPR009027">
    <property type="entry name" value="Ribosomal_bL9/RNase_H1_N"/>
</dbReference>
<dbReference type="InterPro" id="IPR020594">
    <property type="entry name" value="Ribosomal_bL9_bac/chp"/>
</dbReference>
<dbReference type="InterPro" id="IPR020069">
    <property type="entry name" value="Ribosomal_bL9_C"/>
</dbReference>
<dbReference type="InterPro" id="IPR036791">
    <property type="entry name" value="Ribosomal_bL9_C_sf"/>
</dbReference>
<dbReference type="InterPro" id="IPR020070">
    <property type="entry name" value="Ribosomal_bL9_N"/>
</dbReference>
<dbReference type="InterPro" id="IPR036935">
    <property type="entry name" value="Ribosomal_bL9_N_sf"/>
</dbReference>
<dbReference type="NCBIfam" id="TIGR00158">
    <property type="entry name" value="L9"/>
    <property type="match status" value="1"/>
</dbReference>
<dbReference type="PANTHER" id="PTHR21368">
    <property type="entry name" value="50S RIBOSOMAL PROTEIN L9"/>
    <property type="match status" value="1"/>
</dbReference>
<dbReference type="Pfam" id="PF03948">
    <property type="entry name" value="Ribosomal_L9_C"/>
    <property type="match status" value="1"/>
</dbReference>
<dbReference type="Pfam" id="PF01281">
    <property type="entry name" value="Ribosomal_L9_N"/>
    <property type="match status" value="1"/>
</dbReference>
<dbReference type="SUPFAM" id="SSF55658">
    <property type="entry name" value="L9 N-domain-like"/>
    <property type="match status" value="1"/>
</dbReference>
<dbReference type="SUPFAM" id="SSF55653">
    <property type="entry name" value="Ribosomal protein L9 C-domain"/>
    <property type="match status" value="1"/>
</dbReference>
<protein>
    <recommendedName>
        <fullName evidence="1">Large ribosomal subunit protein bL9</fullName>
    </recommendedName>
    <alternativeName>
        <fullName evidence="2">50S ribosomal protein L9</fullName>
    </alternativeName>
</protein>
<keyword id="KW-0687">Ribonucleoprotein</keyword>
<keyword id="KW-0689">Ribosomal protein</keyword>
<keyword id="KW-0694">RNA-binding</keyword>
<keyword id="KW-0699">rRNA-binding</keyword>
<reference key="1">
    <citation type="journal article" date="2008" name="DNA Res.">
        <title>The whole-genome sequencing of the obligate intracellular bacterium Orientia tsutsugamushi revealed massive gene amplification during reductive genome evolution.</title>
        <authorList>
            <person name="Nakayama K."/>
            <person name="Yamashita A."/>
            <person name="Kurokawa K."/>
            <person name="Morimoto T."/>
            <person name="Ogawa M."/>
            <person name="Fukuhara M."/>
            <person name="Urakami H."/>
            <person name="Ohnishi M."/>
            <person name="Uchiyama I."/>
            <person name="Ogura Y."/>
            <person name="Ooka T."/>
            <person name="Oshima K."/>
            <person name="Tamura A."/>
            <person name="Hattori M."/>
            <person name="Hayashi T."/>
        </authorList>
    </citation>
    <scope>NUCLEOTIDE SEQUENCE [LARGE SCALE GENOMIC DNA]</scope>
    <source>
        <strain>Ikeda</strain>
    </source>
</reference>
<evidence type="ECO:0000255" key="1">
    <source>
        <dbReference type="HAMAP-Rule" id="MF_00503"/>
    </source>
</evidence>
<evidence type="ECO:0000305" key="2"/>